<evidence type="ECO:0000255" key="1">
    <source>
        <dbReference type="HAMAP-Rule" id="MF_00270"/>
    </source>
</evidence>
<evidence type="ECO:0000256" key="2">
    <source>
        <dbReference type="SAM" id="MobiDB-lite"/>
    </source>
</evidence>
<evidence type="ECO:0000305" key="3"/>
<reference key="1">
    <citation type="journal article" date="2007" name="J. Bacteriol.">
        <title>Whole-genome analysis of the methyl tert-butyl ether-degrading beta-proteobacterium Methylibium petroleiphilum PM1.</title>
        <authorList>
            <person name="Kane S.R."/>
            <person name="Chakicherla A.Y."/>
            <person name="Chain P.S.G."/>
            <person name="Schmidt R."/>
            <person name="Shin M.W."/>
            <person name="Legler T.C."/>
            <person name="Scow K.M."/>
            <person name="Larimer F.W."/>
            <person name="Lucas S.M."/>
            <person name="Richardson P.M."/>
            <person name="Hristova K.R."/>
        </authorList>
    </citation>
    <scope>NUCLEOTIDE SEQUENCE [LARGE SCALE GENOMIC DNA]</scope>
    <source>
        <strain>ATCC BAA-1232 / LMG 22953 / PM1</strain>
    </source>
</reference>
<dbReference type="EMBL" id="CP000555">
    <property type="protein sequence ID" value="ABM94490.1"/>
    <property type="molecule type" value="Genomic_DNA"/>
</dbReference>
<dbReference type="RefSeq" id="WP_011829127.1">
    <property type="nucleotide sequence ID" value="NC_008825.1"/>
</dbReference>
<dbReference type="SMR" id="A2SG01"/>
<dbReference type="STRING" id="420662.Mpe_A1528"/>
<dbReference type="KEGG" id="mpt:Mpe_A1528"/>
<dbReference type="eggNOG" id="COG0238">
    <property type="taxonomic scope" value="Bacteria"/>
</dbReference>
<dbReference type="HOGENOM" id="CLU_148710_0_3_4"/>
<dbReference type="Proteomes" id="UP000000366">
    <property type="component" value="Chromosome"/>
</dbReference>
<dbReference type="GO" id="GO:0022627">
    <property type="term" value="C:cytosolic small ribosomal subunit"/>
    <property type="evidence" value="ECO:0007669"/>
    <property type="project" value="TreeGrafter"/>
</dbReference>
<dbReference type="GO" id="GO:0070181">
    <property type="term" value="F:small ribosomal subunit rRNA binding"/>
    <property type="evidence" value="ECO:0007669"/>
    <property type="project" value="TreeGrafter"/>
</dbReference>
<dbReference type="GO" id="GO:0003735">
    <property type="term" value="F:structural constituent of ribosome"/>
    <property type="evidence" value="ECO:0007669"/>
    <property type="project" value="InterPro"/>
</dbReference>
<dbReference type="GO" id="GO:0006412">
    <property type="term" value="P:translation"/>
    <property type="evidence" value="ECO:0007669"/>
    <property type="project" value="UniProtKB-UniRule"/>
</dbReference>
<dbReference type="Gene3D" id="4.10.640.10">
    <property type="entry name" value="Ribosomal protein S18"/>
    <property type="match status" value="1"/>
</dbReference>
<dbReference type="HAMAP" id="MF_00270">
    <property type="entry name" value="Ribosomal_bS18"/>
    <property type="match status" value="1"/>
</dbReference>
<dbReference type="InterPro" id="IPR001648">
    <property type="entry name" value="Ribosomal_bS18"/>
</dbReference>
<dbReference type="InterPro" id="IPR036870">
    <property type="entry name" value="Ribosomal_bS18_sf"/>
</dbReference>
<dbReference type="NCBIfam" id="TIGR00165">
    <property type="entry name" value="S18"/>
    <property type="match status" value="1"/>
</dbReference>
<dbReference type="PANTHER" id="PTHR13479">
    <property type="entry name" value="30S RIBOSOMAL PROTEIN S18"/>
    <property type="match status" value="1"/>
</dbReference>
<dbReference type="PANTHER" id="PTHR13479:SF40">
    <property type="entry name" value="SMALL RIBOSOMAL SUBUNIT PROTEIN BS18M"/>
    <property type="match status" value="1"/>
</dbReference>
<dbReference type="Pfam" id="PF01084">
    <property type="entry name" value="Ribosomal_S18"/>
    <property type="match status" value="1"/>
</dbReference>
<dbReference type="PRINTS" id="PR00974">
    <property type="entry name" value="RIBOSOMALS18"/>
</dbReference>
<dbReference type="SUPFAM" id="SSF46911">
    <property type="entry name" value="Ribosomal protein S18"/>
    <property type="match status" value="1"/>
</dbReference>
<organism>
    <name type="scientific">Methylibium petroleiphilum (strain ATCC BAA-1232 / LMG 22953 / PM1)</name>
    <dbReference type="NCBI Taxonomy" id="420662"/>
    <lineage>
        <taxon>Bacteria</taxon>
        <taxon>Pseudomonadati</taxon>
        <taxon>Pseudomonadota</taxon>
        <taxon>Betaproteobacteria</taxon>
        <taxon>Burkholderiales</taxon>
        <taxon>Sphaerotilaceae</taxon>
        <taxon>Methylibium</taxon>
    </lineage>
</organism>
<sequence>MPPPRGKGRFGKDKRPKRNTQSLLFRRKRFCRFTVTGVTEIDYKDVDTLRDFIAENGKITPARLTGTRAFFQRQLSTCIKRARFLALLPYSDQHKS</sequence>
<protein>
    <recommendedName>
        <fullName evidence="1">Small ribosomal subunit protein bS18</fullName>
    </recommendedName>
    <alternativeName>
        <fullName evidence="3">30S ribosomal protein S18</fullName>
    </alternativeName>
</protein>
<accession>A2SG01</accession>
<comment type="function">
    <text evidence="1">Binds as a heterodimer with protein bS6 to the central domain of the 16S rRNA, where it helps stabilize the platform of the 30S subunit.</text>
</comment>
<comment type="subunit">
    <text evidence="1">Part of the 30S ribosomal subunit. Forms a tight heterodimer with protein bS6.</text>
</comment>
<comment type="similarity">
    <text evidence="1">Belongs to the bacterial ribosomal protein bS18 family.</text>
</comment>
<name>RS18_METPP</name>
<proteinExistence type="inferred from homology"/>
<keyword id="KW-1185">Reference proteome</keyword>
<keyword id="KW-0687">Ribonucleoprotein</keyword>
<keyword id="KW-0689">Ribosomal protein</keyword>
<keyword id="KW-0694">RNA-binding</keyword>
<keyword id="KW-0699">rRNA-binding</keyword>
<feature type="chain" id="PRO_1000003535" description="Small ribosomal subunit protein bS18">
    <location>
        <begin position="1"/>
        <end position="96"/>
    </location>
</feature>
<feature type="region of interest" description="Disordered" evidence="2">
    <location>
        <begin position="1"/>
        <end position="21"/>
    </location>
</feature>
<feature type="compositionally biased region" description="Basic residues" evidence="2">
    <location>
        <begin position="1"/>
        <end position="18"/>
    </location>
</feature>
<gene>
    <name evidence="1" type="primary">rpsR</name>
    <name type="ordered locus">Mpe_A1528</name>
</gene>